<evidence type="ECO:0000255" key="1">
    <source>
        <dbReference type="HAMAP-Rule" id="MF_00095"/>
    </source>
</evidence>
<name>SFSA_CLOBL</name>
<feature type="chain" id="PRO_1000007975" description="Sugar fermentation stimulation protein homolog">
    <location>
        <begin position="1"/>
        <end position="230"/>
    </location>
</feature>
<protein>
    <recommendedName>
        <fullName evidence="1">Sugar fermentation stimulation protein homolog</fullName>
    </recommendedName>
</protein>
<reference key="1">
    <citation type="submission" date="2007-06" db="EMBL/GenBank/DDBJ databases">
        <authorList>
            <person name="Brinkac L.M."/>
            <person name="Daugherty S."/>
            <person name="Dodson R.J."/>
            <person name="Madupu R."/>
            <person name="Brown J.L."/>
            <person name="Bruce D."/>
            <person name="Detter C."/>
            <person name="Munk C."/>
            <person name="Smith L.A."/>
            <person name="Smith T.J."/>
            <person name="White O."/>
            <person name="Brettin T.S."/>
        </authorList>
    </citation>
    <scope>NUCLEOTIDE SEQUENCE [LARGE SCALE GENOMIC DNA]</scope>
    <source>
        <strain>Langeland / NCTC 10281 / Type F</strain>
    </source>
</reference>
<sequence>MKITKNILKAEFIKRPNRFQAYVKINEKIEMVHVPNTGRCKEILIPGSTVILREENNENRKTRYDLIAGYKGDMLISIDSQIPNKVVYEALMNFKIEILKEYTNIKREKTFGKSRFDFKLEKENGEVYYLEVKGVTLENDGLTMFPDAPTERGTKHILELIDVKNKGMGAGVLFLIQLNGVKKFTPNHKMDKNFGEALKLAKEKGVDILAYDCLVEESSISLNNPVSIEI</sequence>
<comment type="similarity">
    <text evidence="1">Belongs to the SfsA family.</text>
</comment>
<organism>
    <name type="scientific">Clostridium botulinum (strain Langeland / NCTC 10281 / Type F)</name>
    <dbReference type="NCBI Taxonomy" id="441772"/>
    <lineage>
        <taxon>Bacteria</taxon>
        <taxon>Bacillati</taxon>
        <taxon>Bacillota</taxon>
        <taxon>Clostridia</taxon>
        <taxon>Eubacteriales</taxon>
        <taxon>Clostridiaceae</taxon>
        <taxon>Clostridium</taxon>
    </lineage>
</organism>
<gene>
    <name evidence="1" type="primary">sfsA</name>
    <name type="ordered locus">CLI_0052</name>
</gene>
<dbReference type="EMBL" id="CP000728">
    <property type="protein sequence ID" value="ABS39602.1"/>
    <property type="molecule type" value="Genomic_DNA"/>
</dbReference>
<dbReference type="RefSeq" id="WP_003400112.1">
    <property type="nucleotide sequence ID" value="NC_009699.1"/>
</dbReference>
<dbReference type="SMR" id="A7G9D8"/>
<dbReference type="KEGG" id="cbf:CLI_0052"/>
<dbReference type="HOGENOM" id="CLU_052299_1_0_9"/>
<dbReference type="Proteomes" id="UP000002410">
    <property type="component" value="Chromosome"/>
</dbReference>
<dbReference type="GO" id="GO:0003677">
    <property type="term" value="F:DNA binding"/>
    <property type="evidence" value="ECO:0007669"/>
    <property type="project" value="InterPro"/>
</dbReference>
<dbReference type="CDD" id="cd22359">
    <property type="entry name" value="SfsA-like_bacterial"/>
    <property type="match status" value="1"/>
</dbReference>
<dbReference type="FunFam" id="2.40.50.580:FF:000002">
    <property type="entry name" value="Sugar fermentation stimulation protein homolog"/>
    <property type="match status" value="1"/>
</dbReference>
<dbReference type="FunFam" id="3.40.1350.60:FF:000002">
    <property type="entry name" value="Sugar fermentation stimulation protein homolog"/>
    <property type="match status" value="1"/>
</dbReference>
<dbReference type="Gene3D" id="2.40.50.580">
    <property type="match status" value="1"/>
</dbReference>
<dbReference type="Gene3D" id="3.40.1350.60">
    <property type="match status" value="1"/>
</dbReference>
<dbReference type="HAMAP" id="MF_00095">
    <property type="entry name" value="SfsA"/>
    <property type="match status" value="1"/>
</dbReference>
<dbReference type="InterPro" id="IPR005224">
    <property type="entry name" value="SfsA"/>
</dbReference>
<dbReference type="InterPro" id="IPR040452">
    <property type="entry name" value="SfsA_C"/>
</dbReference>
<dbReference type="InterPro" id="IPR041465">
    <property type="entry name" value="SfsA_N"/>
</dbReference>
<dbReference type="NCBIfam" id="TIGR00230">
    <property type="entry name" value="sfsA"/>
    <property type="match status" value="1"/>
</dbReference>
<dbReference type="PANTHER" id="PTHR30545">
    <property type="entry name" value="SUGAR FERMENTATION STIMULATION PROTEIN A"/>
    <property type="match status" value="1"/>
</dbReference>
<dbReference type="PANTHER" id="PTHR30545:SF2">
    <property type="entry name" value="SUGAR FERMENTATION STIMULATION PROTEIN A"/>
    <property type="match status" value="1"/>
</dbReference>
<dbReference type="Pfam" id="PF03749">
    <property type="entry name" value="SfsA"/>
    <property type="match status" value="1"/>
</dbReference>
<dbReference type="Pfam" id="PF17746">
    <property type="entry name" value="SfsA_N"/>
    <property type="match status" value="1"/>
</dbReference>
<proteinExistence type="inferred from homology"/>
<accession>A7G9D8</accession>